<sequence length="400" mass="41626">MSLLDTLQRGLADLDAQGLRRVRRTADTACDAHMTVDGREIVGFASNDYLGLAAHPALIAAFAEGAQRYGSGSGGSHLLGGHSRAHATLEDELAAFSGGFSDAPRALYFSTGYMANLAAMTALTGKAATIFSDALNHASLIDGMRLSRANVQVYPHADTAALAALLDASDAETKLIVSDTVFSMDGDLAPLAELVALAERHGAWLVVDDAHGFGVLGPQGRGALAAAALRSPNLVYVGTLGKAAGVAGAFVIAHETVIEWMIQRARSYIFTTAAPPAVAHAVSASLKVIAGDEGDARRAHLAALIERTRALLRNTRWQPVDSHTAVQPLVIGSNDATLAAMRSLDAHGLWVPAIRPPTVPVGTSRLRVSLSAAHSFDDLARLEAALIEASEAQAVQKAAA</sequence>
<protein>
    <recommendedName>
        <fullName evidence="1">8-amino-7-oxononanoate synthase</fullName>
        <shortName evidence="1">AONS</shortName>
        <ecNumber evidence="1">2.3.1.47</ecNumber>
    </recommendedName>
    <alternativeName>
        <fullName evidence="1">7-keto-8-amino-pelargonic acid synthase</fullName>
        <shortName evidence="1">7-KAP synthase</shortName>
        <shortName evidence="1">KAPA synthase</shortName>
    </alternativeName>
    <alternativeName>
        <fullName evidence="1">8-amino-7-ketopelargonate synthase</fullName>
    </alternativeName>
</protein>
<reference key="1">
    <citation type="submission" date="2005-10" db="EMBL/GenBank/DDBJ databases">
        <title>Complete sequence of chromosome 1 of Burkholderia sp. 383.</title>
        <authorList>
            <consortium name="US DOE Joint Genome Institute"/>
            <person name="Copeland A."/>
            <person name="Lucas S."/>
            <person name="Lapidus A."/>
            <person name="Barry K."/>
            <person name="Detter J.C."/>
            <person name="Glavina T."/>
            <person name="Hammon N."/>
            <person name="Israni S."/>
            <person name="Pitluck S."/>
            <person name="Chain P."/>
            <person name="Malfatti S."/>
            <person name="Shin M."/>
            <person name="Vergez L."/>
            <person name="Schmutz J."/>
            <person name="Larimer F."/>
            <person name="Land M."/>
            <person name="Kyrpides N."/>
            <person name="Lykidis A."/>
            <person name="Richardson P."/>
        </authorList>
    </citation>
    <scope>NUCLEOTIDE SEQUENCE [LARGE SCALE GENOMIC DNA]</scope>
    <source>
        <strain>ATCC 17760 / DSM 23089 / LMG 22485 / NCIMB 9086 / R18194 / 383</strain>
    </source>
</reference>
<comment type="function">
    <text evidence="1">Catalyzes the decarboxylative condensation of pimeloyl-[acyl-carrier protein] and L-alanine to produce 8-amino-7-oxononanoate (AON), [acyl-carrier protein], and carbon dioxide.</text>
</comment>
<comment type="catalytic activity">
    <reaction evidence="1">
        <text>6-carboxyhexanoyl-[ACP] + L-alanine + H(+) = (8S)-8-amino-7-oxononanoate + holo-[ACP] + CO2</text>
        <dbReference type="Rhea" id="RHEA:42288"/>
        <dbReference type="Rhea" id="RHEA-COMP:9685"/>
        <dbReference type="Rhea" id="RHEA-COMP:9955"/>
        <dbReference type="ChEBI" id="CHEBI:15378"/>
        <dbReference type="ChEBI" id="CHEBI:16526"/>
        <dbReference type="ChEBI" id="CHEBI:57972"/>
        <dbReference type="ChEBI" id="CHEBI:64479"/>
        <dbReference type="ChEBI" id="CHEBI:78846"/>
        <dbReference type="ChEBI" id="CHEBI:149468"/>
        <dbReference type="EC" id="2.3.1.47"/>
    </reaction>
</comment>
<comment type="cofactor">
    <cofactor evidence="1">
        <name>pyridoxal 5'-phosphate</name>
        <dbReference type="ChEBI" id="CHEBI:597326"/>
    </cofactor>
</comment>
<comment type="pathway">
    <text evidence="1">Cofactor biosynthesis; biotin biosynthesis.</text>
</comment>
<comment type="subunit">
    <text evidence="1">Homodimer.</text>
</comment>
<comment type="similarity">
    <text evidence="1">Belongs to the class-II pyridoxal-phosphate-dependent aminotransferase family. BioF subfamily.</text>
</comment>
<organism>
    <name type="scientific">Burkholderia lata (strain ATCC 17760 / DSM 23089 / LMG 22485 / NCIMB 9086 / R18194 / 383)</name>
    <dbReference type="NCBI Taxonomy" id="482957"/>
    <lineage>
        <taxon>Bacteria</taxon>
        <taxon>Pseudomonadati</taxon>
        <taxon>Pseudomonadota</taxon>
        <taxon>Betaproteobacteria</taxon>
        <taxon>Burkholderiales</taxon>
        <taxon>Burkholderiaceae</taxon>
        <taxon>Burkholderia</taxon>
        <taxon>Burkholderia cepacia complex</taxon>
    </lineage>
</organism>
<proteinExistence type="inferred from homology"/>
<accession>Q39CE6</accession>
<keyword id="KW-0093">Biotin biosynthesis</keyword>
<keyword id="KW-0663">Pyridoxal phosphate</keyword>
<keyword id="KW-0808">Transferase</keyword>
<name>BIOF_BURL3</name>
<gene>
    <name evidence="1" type="primary">bioF</name>
    <name type="ordered locus">Bcep18194_A6276</name>
</gene>
<evidence type="ECO:0000255" key="1">
    <source>
        <dbReference type="HAMAP-Rule" id="MF_01693"/>
    </source>
</evidence>
<feature type="chain" id="PRO_0000380944" description="8-amino-7-oxononanoate synthase">
    <location>
        <begin position="1"/>
        <end position="400"/>
    </location>
</feature>
<feature type="binding site" evidence="1">
    <location>
        <position position="21"/>
    </location>
    <ligand>
        <name>substrate</name>
    </ligand>
</feature>
<feature type="binding site" evidence="1">
    <location>
        <begin position="112"/>
        <end position="113"/>
    </location>
    <ligand>
        <name>pyridoxal 5'-phosphate</name>
        <dbReference type="ChEBI" id="CHEBI:597326"/>
    </ligand>
</feature>
<feature type="binding site" evidence="1">
    <location>
        <position position="137"/>
    </location>
    <ligand>
        <name>substrate</name>
    </ligand>
</feature>
<feature type="binding site" evidence="1">
    <location>
        <position position="183"/>
    </location>
    <ligand>
        <name>pyridoxal 5'-phosphate</name>
        <dbReference type="ChEBI" id="CHEBI:597326"/>
    </ligand>
</feature>
<feature type="binding site" evidence="1">
    <location>
        <position position="211"/>
    </location>
    <ligand>
        <name>pyridoxal 5'-phosphate</name>
        <dbReference type="ChEBI" id="CHEBI:597326"/>
    </ligand>
</feature>
<feature type="binding site" evidence="1">
    <location>
        <position position="239"/>
    </location>
    <ligand>
        <name>pyridoxal 5'-phosphate</name>
        <dbReference type="ChEBI" id="CHEBI:597326"/>
    </ligand>
</feature>
<feature type="binding site" evidence="1">
    <location>
        <position position="358"/>
    </location>
    <ligand>
        <name>substrate</name>
    </ligand>
</feature>
<feature type="modified residue" description="N6-(pyridoxal phosphate)lysine" evidence="1">
    <location>
        <position position="242"/>
    </location>
</feature>
<dbReference type="EC" id="2.3.1.47" evidence="1"/>
<dbReference type="EMBL" id="CP000151">
    <property type="protein sequence ID" value="ABB09870.1"/>
    <property type="molecule type" value="Genomic_DNA"/>
</dbReference>
<dbReference type="RefSeq" id="WP_011353376.1">
    <property type="nucleotide sequence ID" value="NC_007510.1"/>
</dbReference>
<dbReference type="SMR" id="Q39CE6"/>
<dbReference type="GeneID" id="45096148"/>
<dbReference type="KEGG" id="bur:Bcep18194_A6276"/>
<dbReference type="PATRIC" id="fig|482957.22.peg.3293"/>
<dbReference type="HOGENOM" id="CLU_015846_11_2_4"/>
<dbReference type="UniPathway" id="UPA00078"/>
<dbReference type="Proteomes" id="UP000002705">
    <property type="component" value="Chromosome 1"/>
</dbReference>
<dbReference type="GO" id="GO:0008710">
    <property type="term" value="F:8-amino-7-oxononanoate synthase activity"/>
    <property type="evidence" value="ECO:0007669"/>
    <property type="project" value="UniProtKB-UniRule"/>
</dbReference>
<dbReference type="GO" id="GO:0030170">
    <property type="term" value="F:pyridoxal phosphate binding"/>
    <property type="evidence" value="ECO:0007669"/>
    <property type="project" value="UniProtKB-UniRule"/>
</dbReference>
<dbReference type="GO" id="GO:0009102">
    <property type="term" value="P:biotin biosynthetic process"/>
    <property type="evidence" value="ECO:0007669"/>
    <property type="project" value="UniProtKB-UniRule"/>
</dbReference>
<dbReference type="Gene3D" id="3.90.1150.10">
    <property type="entry name" value="Aspartate Aminotransferase, domain 1"/>
    <property type="match status" value="1"/>
</dbReference>
<dbReference type="Gene3D" id="3.40.640.10">
    <property type="entry name" value="Type I PLP-dependent aspartate aminotransferase-like (Major domain)"/>
    <property type="match status" value="1"/>
</dbReference>
<dbReference type="HAMAP" id="MF_01693">
    <property type="entry name" value="BioF_aminotrans_2"/>
    <property type="match status" value="1"/>
</dbReference>
<dbReference type="InterPro" id="IPR004839">
    <property type="entry name" value="Aminotransferase_I/II_large"/>
</dbReference>
<dbReference type="InterPro" id="IPR050087">
    <property type="entry name" value="AON_synthase_class-II"/>
</dbReference>
<dbReference type="InterPro" id="IPR004723">
    <property type="entry name" value="AONS_Archaea/Proteobacteria"/>
</dbReference>
<dbReference type="InterPro" id="IPR022834">
    <property type="entry name" value="AONS_Proteobacteria"/>
</dbReference>
<dbReference type="InterPro" id="IPR015424">
    <property type="entry name" value="PyrdxlP-dep_Trfase"/>
</dbReference>
<dbReference type="InterPro" id="IPR015421">
    <property type="entry name" value="PyrdxlP-dep_Trfase_major"/>
</dbReference>
<dbReference type="InterPro" id="IPR015422">
    <property type="entry name" value="PyrdxlP-dep_Trfase_small"/>
</dbReference>
<dbReference type="NCBIfam" id="TIGR00858">
    <property type="entry name" value="bioF"/>
    <property type="match status" value="1"/>
</dbReference>
<dbReference type="PANTHER" id="PTHR13693:SF100">
    <property type="entry name" value="8-AMINO-7-OXONONANOATE SYNTHASE"/>
    <property type="match status" value="1"/>
</dbReference>
<dbReference type="PANTHER" id="PTHR13693">
    <property type="entry name" value="CLASS II AMINOTRANSFERASE/8-AMINO-7-OXONONANOATE SYNTHASE"/>
    <property type="match status" value="1"/>
</dbReference>
<dbReference type="Pfam" id="PF00155">
    <property type="entry name" value="Aminotran_1_2"/>
    <property type="match status" value="1"/>
</dbReference>
<dbReference type="SUPFAM" id="SSF53383">
    <property type="entry name" value="PLP-dependent transferases"/>
    <property type="match status" value="1"/>
</dbReference>